<proteinExistence type="evidence at protein level"/>
<organism>
    <name type="scientific">Encephalitozoon cuniculi (strain GB-M1)</name>
    <name type="common">Microsporidian parasite</name>
    <dbReference type="NCBI Taxonomy" id="284813"/>
    <lineage>
        <taxon>Eukaryota</taxon>
        <taxon>Fungi</taxon>
        <taxon>Fungi incertae sedis</taxon>
        <taxon>Microsporidia</taxon>
        <taxon>Unikaryonidae</taxon>
        <taxon>Encephalitozoon</taxon>
    </lineage>
</organism>
<comment type="subcellular location">
    <subcellularLocation>
        <location evidence="3">Membrane</location>
        <topology evidence="3">Multi-pass membrane protein</topology>
    </subcellularLocation>
</comment>
<comment type="developmental stage">
    <text evidence="2">Expressed in late sporogonial stages.</text>
</comment>
<reference key="1">
    <citation type="journal article" date="2001" name="Nature">
        <title>Genome sequence and gene compaction of the eukaryote parasite Encephalitozoon cuniculi.</title>
        <authorList>
            <person name="Katinka M.D."/>
            <person name="Duprat S."/>
            <person name="Cornillot E."/>
            <person name="Metenier G."/>
            <person name="Thomarat F."/>
            <person name="Prensier G."/>
            <person name="Barbe V."/>
            <person name="Peyretaillade E."/>
            <person name="Brottier P."/>
            <person name="Wincker P."/>
            <person name="Delbac F."/>
            <person name="El Alaoui H."/>
            <person name="Peyret P."/>
            <person name="Saurin W."/>
            <person name="Gouy M."/>
            <person name="Weissenbach J."/>
            <person name="Vivares C.P."/>
        </authorList>
    </citation>
    <scope>NUCLEOTIDE SEQUENCE [LARGE SCALE GENOMIC DNA]</scope>
    <source>
        <strain>GB-M1</strain>
    </source>
</reference>
<reference key="2">
    <citation type="journal article" date="2006" name="Proteomics">
        <title>Proteomic analysis of the eukaryotic parasite Encephalitozoon cuniculi (microsporidia): a reference map for proteins expressed in late sporogonial stages.</title>
        <authorList>
            <person name="Brosson D."/>
            <person name="Kuhn L."/>
            <person name="Delbac F."/>
            <person name="Garin J."/>
            <person name="Vivares C.P."/>
            <person name="Texier C."/>
        </authorList>
    </citation>
    <scope>IDENTIFICATION BY MASS SPECTROMETRY [LARGE SCALE ANALYSIS]</scope>
    <scope>DEVELOPMENTAL STAGE</scope>
    <scope>SUBCELLULAR LOCATION</scope>
</reference>
<feature type="chain" id="PRO_0000383035" description="Uncharacterized membrane protein ECU10_0880">
    <location>
        <begin position="1"/>
        <end position="306"/>
    </location>
</feature>
<feature type="transmembrane region" description="Helical" evidence="1">
    <location>
        <begin position="218"/>
        <end position="238"/>
    </location>
</feature>
<feature type="transmembrane region" description="Helical" evidence="1">
    <location>
        <begin position="284"/>
        <end position="304"/>
    </location>
</feature>
<feature type="glycosylation site" description="N-linked (GlcNAc...) asparagine" evidence="1">
    <location>
        <position position="208"/>
    </location>
</feature>
<keyword id="KW-0325">Glycoprotein</keyword>
<keyword id="KW-0472">Membrane</keyword>
<keyword id="KW-1185">Reference proteome</keyword>
<keyword id="KW-0812">Transmembrane</keyword>
<keyword id="KW-1133">Transmembrane helix</keyword>
<sequence>MEGIKFADVLRSFEKKAEDDEYVSVERDYNERKVIENDVRRTELLGVDKRNRKVIKVLKRLLFVELDKIPIKYTQGMSEIASVFVLYYFQNIVEEEVAKGVLASGSDEESAEESAADGFSEQFIEAPEDENVELKRFVSRHKDTTAILGIVLTNVFRRKLEPLVVDDFKLYKENMRIFVEMMKKKGIRIPELESYKFMGSILTFFLRNLSRMEDVHKVFEIILSCPNTCPFLLLVLFYDKISNGKTIDSIVNNDLFPKVVKLEEEFVETKKRVESRSGFSRMRVMLVGGIASIVAAVVVYKITKKE</sequence>
<protein>
    <recommendedName>
        <fullName>Uncharacterized membrane protein ECU10_0880</fullName>
    </recommendedName>
</protein>
<name>YA88_ENCCU</name>
<dbReference type="EMBL" id="AL590449">
    <property type="protein sequence ID" value="CAD25807.1"/>
    <property type="molecule type" value="Genomic_DNA"/>
</dbReference>
<dbReference type="RefSeq" id="NP_586203.1">
    <property type="nucleotide sequence ID" value="NM_001042036.1"/>
</dbReference>
<dbReference type="SMR" id="Q8SUE5"/>
<dbReference type="GeneID" id="859852"/>
<dbReference type="KEGG" id="ecu:ECU10_0880"/>
<dbReference type="VEuPathDB" id="MicrosporidiaDB:ECU10_0880"/>
<dbReference type="HOGENOM" id="CLU_084270_0_0_1"/>
<dbReference type="InParanoid" id="Q8SUE5"/>
<dbReference type="OMA" id="DSMNDIY"/>
<dbReference type="OrthoDB" id="2193149at2759"/>
<dbReference type="Proteomes" id="UP000000819">
    <property type="component" value="Chromosome X"/>
</dbReference>
<dbReference type="GO" id="GO:0016020">
    <property type="term" value="C:membrane"/>
    <property type="evidence" value="ECO:0007669"/>
    <property type="project" value="UniProtKB-SubCell"/>
</dbReference>
<dbReference type="Gene3D" id="1.10.8.270">
    <property type="entry name" value="putative rabgap domain of human tbc1 domain family member 14 like domains"/>
    <property type="match status" value="1"/>
</dbReference>
<dbReference type="InterPro" id="IPR000195">
    <property type="entry name" value="Rab-GAP-TBC_dom"/>
</dbReference>
<dbReference type="InterPro" id="IPR035969">
    <property type="entry name" value="Rab-GAP_TBC_sf"/>
</dbReference>
<dbReference type="Pfam" id="PF00566">
    <property type="entry name" value="RabGAP-TBC"/>
    <property type="match status" value="1"/>
</dbReference>
<dbReference type="SUPFAM" id="SSF47923">
    <property type="entry name" value="Ypt/Rab-GAP domain of gyp1p"/>
    <property type="match status" value="1"/>
</dbReference>
<accession>Q8SUE5</accession>
<gene>
    <name type="ordered locus">ECU10_0880</name>
</gene>
<evidence type="ECO:0000255" key="1"/>
<evidence type="ECO:0000269" key="2">
    <source>
    </source>
</evidence>
<evidence type="ECO:0000305" key="3"/>